<feature type="chain" id="PRO_0000409822" description="DNA gyrase subunit A">
    <location>
        <begin position="1"/>
        <end position="834"/>
    </location>
</feature>
<feature type="domain" description="Topo IIA-type catalytic" evidence="2">
    <location>
        <begin position="53"/>
        <end position="520"/>
    </location>
</feature>
<feature type="short sequence motif" description="GyrA-box" evidence="1">
    <location>
        <begin position="547"/>
        <end position="553"/>
    </location>
</feature>
<feature type="active site" description="O-(5'-phospho-DNA)-tyrosine intermediate" evidence="1">
    <location>
        <position position="141"/>
    </location>
</feature>
<keyword id="KW-0067">ATP-binding</keyword>
<keyword id="KW-0963">Cytoplasm</keyword>
<keyword id="KW-0238">DNA-binding</keyword>
<keyword id="KW-0413">Isomerase</keyword>
<keyword id="KW-0547">Nucleotide-binding</keyword>
<keyword id="KW-0799">Topoisomerase</keyword>
<proteinExistence type="inferred from homology"/>
<sequence>MAVKKNKEDNSEERQYSTLTKDILKRVDHISIENELRESYLTYAMSVIVSRALPDVRDGLKPVHRRILYAMYDANLTHDKPYKKSAATVGEVLARYHPHGDAAVYGTMVRMAQDFSMRYLLVDGQGNFGSIDDDPPAAMRYTEARMTRFAEEMLNDIEKETVKFVPNFDDSRTEPSVLPATVPQLLVNGSMGIAIGMATNMPPHNLKEVVNAIVYYIDHQDAEIKDLMRYVQGPDFPTAGIIYGKEGIKEAYTTGKGRIKLRARLEVEETKRDREAIVVKELPYGVVKTTLHEKIADLVKQGKIEGVADIRDESSNRAGIRLIIELKKGVATQIVLNQLWKHTDLETTFGIINLALVNGEPKVLNLKELIKYFVDHRVEVITKRTEYDLNQAKAKAHILEGLLIAQANIEEVIRIIRESENTDAARTTLMNRFKLSEKQAQAILDMPLKRLTALEKLKIEQELQQLREFIAYCEDLLAHPEKILAVIKDELKKISEKYGDDRRSEIIGKTNDTEIDEEDLIHDEDVAVSITTQGFIKRVPASSYRTQGRGGVGVQGGKSQGEHYIEHLFVASTKDYLFIFTDRGKAFWMKVHEIPALSKISQGKSIKFILNLAPEEKITSYFTVSEFDPKQSIIMVTKMGTIKKMELKHLENAKKRGILALTLENNDELVAVSPVQTGDDFIMTTAAGLALRITEEKIRKMGRAAAGVKGISLDDDDICVSGNAIHKGESLIVITENGIGKRLSSKQFNVKGRGGKGQIYIKPDNKTGNVVSVKTVGDKDEIMVVTTDDMTIKIKADSIPELGRNAKGVKIVNISDGARVSDLAVVPADNEEKK</sequence>
<gene>
    <name evidence="1" type="primary">gyrA</name>
    <name type="ordered locus">BHWA1_01001</name>
</gene>
<organism>
    <name type="scientific">Brachyspira hyodysenteriae (strain ATCC 49526 / WA1)</name>
    <dbReference type="NCBI Taxonomy" id="565034"/>
    <lineage>
        <taxon>Bacteria</taxon>
        <taxon>Pseudomonadati</taxon>
        <taxon>Spirochaetota</taxon>
        <taxon>Spirochaetia</taxon>
        <taxon>Brachyspirales</taxon>
        <taxon>Brachyspiraceae</taxon>
        <taxon>Brachyspira</taxon>
    </lineage>
</organism>
<comment type="function">
    <text evidence="1">A type II topoisomerase that negatively supercoils closed circular double-stranded (ds) DNA in an ATP-dependent manner to modulate DNA topology and maintain chromosomes in an underwound state. Negative supercoiling favors strand separation, and DNA replication, transcription, recombination and repair, all of which involve strand separation. Also able to catalyze the interconversion of other topological isomers of dsDNA rings, including catenanes and knotted rings. Type II topoisomerases break and join 2 DNA strands simultaneously in an ATP-dependent manner.</text>
</comment>
<comment type="catalytic activity">
    <reaction evidence="1">
        <text>ATP-dependent breakage, passage and rejoining of double-stranded DNA.</text>
        <dbReference type="EC" id="5.6.2.2"/>
    </reaction>
</comment>
<comment type="subunit">
    <text evidence="1">Heterotetramer, composed of two GyrA and two GyrB chains. In the heterotetramer, GyrA contains the active site tyrosine that forms a transient covalent intermediate with DNA, while GyrB binds cofactors and catalyzes ATP hydrolysis.</text>
</comment>
<comment type="subcellular location">
    <subcellularLocation>
        <location evidence="1">Cytoplasm</location>
    </subcellularLocation>
</comment>
<comment type="miscellaneous">
    <text evidence="1">Few gyrases are as efficient as E.coli at forming negative supercoils. Not all organisms have 2 type II topoisomerases; in organisms with a single type II topoisomerase this enzyme also has to decatenate newly replicated chromosomes.</text>
</comment>
<comment type="similarity">
    <text evidence="1">Belongs to the type II topoisomerase GyrA/ParC subunit family.</text>
</comment>
<name>GYRA_BRAHW</name>
<reference key="1">
    <citation type="journal article" date="2009" name="PLoS ONE">
        <title>Genome sequence of the pathogenic intestinal spirochete Brachyspira hyodysenteriae reveals adaptations to its lifestyle in the porcine large intestine.</title>
        <authorList>
            <person name="Bellgard M.I."/>
            <person name="Wanchanthuek P."/>
            <person name="La T."/>
            <person name="Ryan K."/>
            <person name="Moolhuijzen P."/>
            <person name="Albertyn Z."/>
            <person name="Shaban B."/>
            <person name="Motro Y."/>
            <person name="Dunn D.S."/>
            <person name="Schibeci D."/>
            <person name="Hunter A."/>
            <person name="Barrero R."/>
            <person name="Phillips N.D."/>
            <person name="Hampson D.J."/>
        </authorList>
    </citation>
    <scope>NUCLEOTIDE SEQUENCE [LARGE SCALE GENOMIC DNA]</scope>
    <source>
        <strain>ATCC 49526 / WA1</strain>
    </source>
</reference>
<protein>
    <recommendedName>
        <fullName evidence="1">DNA gyrase subunit A</fullName>
        <ecNumber evidence="1">5.6.2.2</ecNumber>
    </recommendedName>
</protein>
<dbReference type="EC" id="5.6.2.2" evidence="1"/>
<dbReference type="EMBL" id="CP001357">
    <property type="protein sequence ID" value="ACN83484.1"/>
    <property type="molecule type" value="Genomic_DNA"/>
</dbReference>
<dbReference type="RefSeq" id="WP_012670533.1">
    <property type="nucleotide sequence ID" value="NC_012225.1"/>
</dbReference>
<dbReference type="SMR" id="C0R046"/>
<dbReference type="STRING" id="565034.BHWA1_01001"/>
<dbReference type="KEGG" id="bhy:BHWA1_01001"/>
<dbReference type="eggNOG" id="COG0188">
    <property type="taxonomic scope" value="Bacteria"/>
</dbReference>
<dbReference type="HOGENOM" id="CLU_002977_6_1_12"/>
<dbReference type="Proteomes" id="UP000001803">
    <property type="component" value="Chromosome"/>
</dbReference>
<dbReference type="GO" id="GO:0005694">
    <property type="term" value="C:chromosome"/>
    <property type="evidence" value="ECO:0007669"/>
    <property type="project" value="InterPro"/>
</dbReference>
<dbReference type="GO" id="GO:0005737">
    <property type="term" value="C:cytoplasm"/>
    <property type="evidence" value="ECO:0007669"/>
    <property type="project" value="UniProtKB-SubCell"/>
</dbReference>
<dbReference type="GO" id="GO:0009330">
    <property type="term" value="C:DNA topoisomerase type II (double strand cut, ATP-hydrolyzing) complex"/>
    <property type="evidence" value="ECO:0007669"/>
    <property type="project" value="TreeGrafter"/>
</dbReference>
<dbReference type="GO" id="GO:0005524">
    <property type="term" value="F:ATP binding"/>
    <property type="evidence" value="ECO:0007669"/>
    <property type="project" value="UniProtKB-UniRule"/>
</dbReference>
<dbReference type="GO" id="GO:0003677">
    <property type="term" value="F:DNA binding"/>
    <property type="evidence" value="ECO:0007669"/>
    <property type="project" value="UniProtKB-UniRule"/>
</dbReference>
<dbReference type="GO" id="GO:0034335">
    <property type="term" value="F:DNA negative supercoiling activity"/>
    <property type="evidence" value="ECO:0007669"/>
    <property type="project" value="UniProtKB-ARBA"/>
</dbReference>
<dbReference type="GO" id="GO:0006265">
    <property type="term" value="P:DNA topological change"/>
    <property type="evidence" value="ECO:0007669"/>
    <property type="project" value="UniProtKB-UniRule"/>
</dbReference>
<dbReference type="GO" id="GO:0006261">
    <property type="term" value="P:DNA-templated DNA replication"/>
    <property type="evidence" value="ECO:0007669"/>
    <property type="project" value="UniProtKB-UniRule"/>
</dbReference>
<dbReference type="CDD" id="cd00187">
    <property type="entry name" value="TOP4c"/>
    <property type="match status" value="1"/>
</dbReference>
<dbReference type="FunFam" id="1.10.268.10:FF:000001">
    <property type="entry name" value="DNA gyrase subunit A"/>
    <property type="match status" value="1"/>
</dbReference>
<dbReference type="FunFam" id="3.30.1360.40:FF:000002">
    <property type="entry name" value="DNA gyrase subunit A"/>
    <property type="match status" value="1"/>
</dbReference>
<dbReference type="FunFam" id="3.90.199.10:FF:000001">
    <property type="entry name" value="DNA gyrase subunit A"/>
    <property type="match status" value="1"/>
</dbReference>
<dbReference type="FunFam" id="2.120.10.90:FF:000005">
    <property type="entry name" value="DNA topoisomerase 4 subunit A"/>
    <property type="match status" value="1"/>
</dbReference>
<dbReference type="Gene3D" id="3.30.1360.40">
    <property type="match status" value="1"/>
</dbReference>
<dbReference type="Gene3D" id="2.120.10.90">
    <property type="entry name" value="DNA gyrase/topoisomerase IV, subunit A, C-terminal"/>
    <property type="match status" value="1"/>
</dbReference>
<dbReference type="Gene3D" id="3.90.199.10">
    <property type="entry name" value="Topoisomerase II, domain 5"/>
    <property type="match status" value="1"/>
</dbReference>
<dbReference type="Gene3D" id="1.10.268.10">
    <property type="entry name" value="Topoisomerase, domain 3"/>
    <property type="match status" value="1"/>
</dbReference>
<dbReference type="HAMAP" id="MF_01897">
    <property type="entry name" value="GyrA"/>
    <property type="match status" value="1"/>
</dbReference>
<dbReference type="InterPro" id="IPR005743">
    <property type="entry name" value="GyrA"/>
</dbReference>
<dbReference type="InterPro" id="IPR006691">
    <property type="entry name" value="GyrA/parC_rep"/>
</dbReference>
<dbReference type="InterPro" id="IPR035516">
    <property type="entry name" value="Gyrase/topoIV_suA_C"/>
</dbReference>
<dbReference type="InterPro" id="IPR013760">
    <property type="entry name" value="Topo_IIA-like_dom_sf"/>
</dbReference>
<dbReference type="InterPro" id="IPR013758">
    <property type="entry name" value="Topo_IIA_A/C_ab"/>
</dbReference>
<dbReference type="InterPro" id="IPR013757">
    <property type="entry name" value="Topo_IIA_A_a_sf"/>
</dbReference>
<dbReference type="InterPro" id="IPR002205">
    <property type="entry name" value="Topo_IIA_dom_A"/>
</dbReference>
<dbReference type="InterPro" id="IPR050220">
    <property type="entry name" value="Type_II_DNA_Topoisomerases"/>
</dbReference>
<dbReference type="NCBIfam" id="TIGR01063">
    <property type="entry name" value="gyrA"/>
    <property type="match status" value="1"/>
</dbReference>
<dbReference type="NCBIfam" id="NF004043">
    <property type="entry name" value="PRK05560.1"/>
    <property type="match status" value="1"/>
</dbReference>
<dbReference type="NCBIfam" id="NF004044">
    <property type="entry name" value="PRK05561.1"/>
    <property type="match status" value="1"/>
</dbReference>
<dbReference type="PANTHER" id="PTHR43493:SF5">
    <property type="entry name" value="DNA GYRASE SUBUNIT A, CHLOROPLASTIC_MITOCHONDRIAL"/>
    <property type="match status" value="1"/>
</dbReference>
<dbReference type="PANTHER" id="PTHR43493">
    <property type="entry name" value="DNA GYRASE/TOPOISOMERASE SUBUNIT A"/>
    <property type="match status" value="1"/>
</dbReference>
<dbReference type="Pfam" id="PF03989">
    <property type="entry name" value="DNA_gyraseA_C"/>
    <property type="match status" value="6"/>
</dbReference>
<dbReference type="Pfam" id="PF00521">
    <property type="entry name" value="DNA_topoisoIV"/>
    <property type="match status" value="1"/>
</dbReference>
<dbReference type="SMART" id="SM00434">
    <property type="entry name" value="TOP4c"/>
    <property type="match status" value="1"/>
</dbReference>
<dbReference type="SUPFAM" id="SSF101904">
    <property type="entry name" value="GyrA/ParC C-terminal domain-like"/>
    <property type="match status" value="1"/>
</dbReference>
<dbReference type="SUPFAM" id="SSF56719">
    <property type="entry name" value="Type II DNA topoisomerase"/>
    <property type="match status" value="1"/>
</dbReference>
<dbReference type="PROSITE" id="PS52040">
    <property type="entry name" value="TOPO_IIA"/>
    <property type="match status" value="1"/>
</dbReference>
<evidence type="ECO:0000255" key="1">
    <source>
        <dbReference type="HAMAP-Rule" id="MF_01897"/>
    </source>
</evidence>
<evidence type="ECO:0000255" key="2">
    <source>
        <dbReference type="PROSITE-ProRule" id="PRU01384"/>
    </source>
</evidence>
<accession>C0R046</accession>